<protein>
    <recommendedName>
        <fullName evidence="2">Ribulokinase</fullName>
        <ecNumber evidence="2">2.7.1.16</ecNumber>
    </recommendedName>
</protein>
<proteinExistence type="inferred from homology"/>
<dbReference type="EC" id="2.7.1.16" evidence="2"/>
<dbReference type="EMBL" id="AE005674">
    <property type="protein sequence ID" value="AAN41723.1"/>
    <property type="molecule type" value="Genomic_DNA"/>
</dbReference>
<dbReference type="EMBL" id="AE014073">
    <property type="protein sequence ID" value="AAP15604.1"/>
    <property type="molecule type" value="Genomic_DNA"/>
</dbReference>
<dbReference type="RefSeq" id="NP_706016.1">
    <property type="nucleotide sequence ID" value="NC_004337.2"/>
</dbReference>
<dbReference type="RefSeq" id="WP_000951772.1">
    <property type="nucleotide sequence ID" value="NZ_WPGW01000005.1"/>
</dbReference>
<dbReference type="SMR" id="Q83MG5"/>
<dbReference type="STRING" id="198214.SF0058"/>
<dbReference type="PaxDb" id="198214-SF0058"/>
<dbReference type="GeneID" id="1024532"/>
<dbReference type="KEGG" id="sfl:SF0058"/>
<dbReference type="KEGG" id="sfx:S0060"/>
<dbReference type="PATRIC" id="fig|198214.7.peg.69"/>
<dbReference type="HOGENOM" id="CLU_009281_9_1_6"/>
<dbReference type="UniPathway" id="UPA00145">
    <property type="reaction ID" value="UER00566"/>
</dbReference>
<dbReference type="Proteomes" id="UP000001006">
    <property type="component" value="Chromosome"/>
</dbReference>
<dbReference type="Proteomes" id="UP000002673">
    <property type="component" value="Chromosome"/>
</dbReference>
<dbReference type="GO" id="GO:0005737">
    <property type="term" value="C:cytoplasm"/>
    <property type="evidence" value="ECO:0007669"/>
    <property type="project" value="TreeGrafter"/>
</dbReference>
<dbReference type="GO" id="GO:0005524">
    <property type="term" value="F:ATP binding"/>
    <property type="evidence" value="ECO:0007669"/>
    <property type="project" value="UniProtKB-KW"/>
</dbReference>
<dbReference type="GO" id="GO:0019150">
    <property type="term" value="F:D-ribulokinase activity"/>
    <property type="evidence" value="ECO:0007669"/>
    <property type="project" value="RHEA"/>
</dbReference>
<dbReference type="GO" id="GO:0008741">
    <property type="term" value="F:ribulokinase activity"/>
    <property type="evidence" value="ECO:0007669"/>
    <property type="project" value="UniProtKB-UniRule"/>
</dbReference>
<dbReference type="GO" id="GO:0019569">
    <property type="term" value="P:L-arabinose catabolic process to xylulose 5-phosphate"/>
    <property type="evidence" value="ECO:0007669"/>
    <property type="project" value="UniProtKB-UniRule"/>
</dbReference>
<dbReference type="CDD" id="cd07781">
    <property type="entry name" value="ASKHA_NBD_FGGY_L-RBK"/>
    <property type="match status" value="1"/>
</dbReference>
<dbReference type="Gene3D" id="1.20.58.2240">
    <property type="match status" value="1"/>
</dbReference>
<dbReference type="Gene3D" id="3.30.420.40">
    <property type="match status" value="1"/>
</dbReference>
<dbReference type="HAMAP" id="MF_00520">
    <property type="entry name" value="Ribulokinase"/>
    <property type="match status" value="1"/>
</dbReference>
<dbReference type="InterPro" id="IPR043129">
    <property type="entry name" value="ATPase_NBD"/>
</dbReference>
<dbReference type="InterPro" id="IPR018485">
    <property type="entry name" value="FGGY_C"/>
</dbReference>
<dbReference type="InterPro" id="IPR005929">
    <property type="entry name" value="Ribulokinase"/>
</dbReference>
<dbReference type="NCBIfam" id="TIGR01234">
    <property type="entry name" value="L-ribulokinase"/>
    <property type="match status" value="1"/>
</dbReference>
<dbReference type="NCBIfam" id="NF003154">
    <property type="entry name" value="PRK04123.1"/>
    <property type="match status" value="1"/>
</dbReference>
<dbReference type="PANTHER" id="PTHR43435:SF4">
    <property type="entry name" value="FGGY CARBOHYDRATE KINASE DOMAIN-CONTAINING PROTEIN"/>
    <property type="match status" value="1"/>
</dbReference>
<dbReference type="PANTHER" id="PTHR43435">
    <property type="entry name" value="RIBULOKINASE"/>
    <property type="match status" value="1"/>
</dbReference>
<dbReference type="Pfam" id="PF02782">
    <property type="entry name" value="FGGY_C"/>
    <property type="match status" value="1"/>
</dbReference>
<dbReference type="SUPFAM" id="SSF53067">
    <property type="entry name" value="Actin-like ATPase domain"/>
    <property type="match status" value="2"/>
</dbReference>
<comment type="catalytic activity">
    <reaction evidence="2">
        <text>D-ribulose + ATP = D-ribulose 5-phosphate + ADP + H(+)</text>
        <dbReference type="Rhea" id="RHEA:17601"/>
        <dbReference type="ChEBI" id="CHEBI:15378"/>
        <dbReference type="ChEBI" id="CHEBI:17173"/>
        <dbReference type="ChEBI" id="CHEBI:30616"/>
        <dbReference type="ChEBI" id="CHEBI:58121"/>
        <dbReference type="ChEBI" id="CHEBI:456216"/>
        <dbReference type="EC" id="2.7.1.16"/>
    </reaction>
</comment>
<comment type="catalytic activity">
    <reaction evidence="2">
        <text>L-ribulose + ATP = L-ribulose 5-phosphate + ADP + H(+)</text>
        <dbReference type="Rhea" id="RHEA:22072"/>
        <dbReference type="ChEBI" id="CHEBI:15378"/>
        <dbReference type="ChEBI" id="CHEBI:16880"/>
        <dbReference type="ChEBI" id="CHEBI:30616"/>
        <dbReference type="ChEBI" id="CHEBI:58226"/>
        <dbReference type="ChEBI" id="CHEBI:456216"/>
        <dbReference type="EC" id="2.7.1.16"/>
    </reaction>
</comment>
<comment type="pathway">
    <text evidence="2">Carbohydrate degradation; L-arabinose degradation via L-ribulose; D-xylulose 5-phosphate from L-arabinose (bacterial route): step 2/3.</text>
</comment>
<comment type="similarity">
    <text evidence="2">Belongs to the ribulokinase family.</text>
</comment>
<accession>Q83MG5</accession>
<accession>Q7C3B1</accession>
<evidence type="ECO:0000250" key="1"/>
<evidence type="ECO:0000255" key="2">
    <source>
        <dbReference type="HAMAP-Rule" id="MF_00520"/>
    </source>
</evidence>
<gene>
    <name evidence="2" type="primary">araB</name>
    <name type="ordered locus">SF0058</name>
    <name type="ordered locus">S0060</name>
</gene>
<sequence>MAIAIGLDFGSDSVRALAVDCASGEEIATSVEWYPRWQKGQFCDAPNNQFRHHPRDYIESMEAALKTVLAELSVEQRAAVVGIGVDSTGSTPAPIDADGNVLALRPEFAENPNAMFVLWKDHTAVEEAEEITRLCHAPGNVDYSRYIGGIYSSEWFWAKILHVTRQDSAVAQSAASWIELCDWVPALLSGTTRPQDIRRGRCSAGHKSLWHESWGGLPPASFFDELDPILNRHLPSPLFTDTWTADIPVGTLCPEWAQRLGLPESVVISGGAFDCHMGAVGAGAQPNALVKVIGTSTCDILIADKQSVGERAVKGICGQVDGSVVPGFIGLEAGQSAFGDIYAWFGRVLGWPLEQLAAQHPELKAQINASQKQLLPALTEAWAKNPSLDHLPVVLDWFNGRRTPNANQRLKGVITDLNLATDTPLLFGGLIAATAFGARAIMECFTDQGIAVNNVMALGGIARKNQVIMQACCDVLNRPLQIVASDQCCALGAAIFAAVAAKVHADIPSAQQKMASAVEKTLQPRSEQAQRFEQLYRRYQQWAMSAEQHYLPTSAPAQAAQAVATL</sequence>
<feature type="initiator methionine" description="Removed" evidence="1">
    <location>
        <position position="1"/>
    </location>
</feature>
<feature type="chain" id="PRO_0000198365" description="Ribulokinase">
    <location>
        <begin position="2"/>
        <end position="566"/>
    </location>
</feature>
<organism>
    <name type="scientific">Shigella flexneri</name>
    <dbReference type="NCBI Taxonomy" id="623"/>
    <lineage>
        <taxon>Bacteria</taxon>
        <taxon>Pseudomonadati</taxon>
        <taxon>Pseudomonadota</taxon>
        <taxon>Gammaproteobacteria</taxon>
        <taxon>Enterobacterales</taxon>
        <taxon>Enterobacteriaceae</taxon>
        <taxon>Shigella</taxon>
    </lineage>
</organism>
<keyword id="KW-0054">Arabinose catabolism</keyword>
<keyword id="KW-0067">ATP-binding</keyword>
<keyword id="KW-0119">Carbohydrate metabolism</keyword>
<keyword id="KW-0418">Kinase</keyword>
<keyword id="KW-0547">Nucleotide-binding</keyword>
<keyword id="KW-1185">Reference proteome</keyword>
<keyword id="KW-0808">Transferase</keyword>
<name>ARAB_SHIFL</name>
<reference key="1">
    <citation type="journal article" date="2002" name="Nucleic Acids Res.">
        <title>Genome sequence of Shigella flexneri 2a: insights into pathogenicity through comparison with genomes of Escherichia coli K12 and O157.</title>
        <authorList>
            <person name="Jin Q."/>
            <person name="Yuan Z."/>
            <person name="Xu J."/>
            <person name="Wang Y."/>
            <person name="Shen Y."/>
            <person name="Lu W."/>
            <person name="Wang J."/>
            <person name="Liu H."/>
            <person name="Yang J."/>
            <person name="Yang F."/>
            <person name="Zhang X."/>
            <person name="Zhang J."/>
            <person name="Yang G."/>
            <person name="Wu H."/>
            <person name="Qu D."/>
            <person name="Dong J."/>
            <person name="Sun L."/>
            <person name="Xue Y."/>
            <person name="Zhao A."/>
            <person name="Gao Y."/>
            <person name="Zhu J."/>
            <person name="Kan B."/>
            <person name="Ding K."/>
            <person name="Chen S."/>
            <person name="Cheng H."/>
            <person name="Yao Z."/>
            <person name="He B."/>
            <person name="Chen R."/>
            <person name="Ma D."/>
            <person name="Qiang B."/>
            <person name="Wen Y."/>
            <person name="Hou Y."/>
            <person name="Yu J."/>
        </authorList>
    </citation>
    <scope>NUCLEOTIDE SEQUENCE [LARGE SCALE GENOMIC DNA]</scope>
    <source>
        <strain>301 / Serotype 2a</strain>
    </source>
</reference>
<reference key="2">
    <citation type="journal article" date="2003" name="Infect. Immun.">
        <title>Complete genome sequence and comparative genomics of Shigella flexneri serotype 2a strain 2457T.</title>
        <authorList>
            <person name="Wei J."/>
            <person name="Goldberg M.B."/>
            <person name="Burland V."/>
            <person name="Venkatesan M.M."/>
            <person name="Deng W."/>
            <person name="Fournier G."/>
            <person name="Mayhew G.F."/>
            <person name="Plunkett G. III"/>
            <person name="Rose D.J."/>
            <person name="Darling A."/>
            <person name="Mau B."/>
            <person name="Perna N.T."/>
            <person name="Payne S.M."/>
            <person name="Runyen-Janecky L.J."/>
            <person name="Zhou S."/>
            <person name="Schwartz D.C."/>
            <person name="Blattner F.R."/>
        </authorList>
    </citation>
    <scope>NUCLEOTIDE SEQUENCE [LARGE SCALE GENOMIC DNA]</scope>
    <source>
        <strain>ATCC 700930 / 2457T / Serotype 2a</strain>
    </source>
</reference>